<organism>
    <name type="scientific">Thermobifida fusca</name>
    <name type="common">Thermomonospora fusca</name>
    <dbReference type="NCBI Taxonomy" id="2021"/>
    <lineage>
        <taxon>Bacteria</taxon>
        <taxon>Bacillati</taxon>
        <taxon>Actinomycetota</taxon>
        <taxon>Actinomycetes</taxon>
        <taxon>Streptosporangiales</taxon>
        <taxon>Nocardiopsidaceae</taxon>
        <taxon>Thermobifida</taxon>
    </lineage>
</organism>
<sequence>MSPRPLRALLGAAAAALVSAAALAFPSQAAANDSPFYVNPNMSSAEWVRNNPNDPRTPVIRDRIASVPQGTWFAHHNPGQITGQVDALMSAAQAAGKIPILVVYNAPGRDCGNHSSGGAPSHSAYRSWIDEFAAGLKNRPAYIIVEPDLISLMSSCMQHVQQEVLETMAYAGKALKAGSSQARIYFDAGHSAWHSPAQMASWLQQADISNSAHGIATNTSNYRWTADEVAYAKAVLSAIGNPSLRAVIDTSRNGNGPAGNEWCDPSGRAIGTPSTTNTGDPMIDAFLWIKLPGEADGCIAGAGQFVPQAAYEMAIAAGGTNPNPNPNPTPTPTPTPTPPPGSSGACTATYTIANEWNDGFQATVTVTANQNITGWTVTWTFTDGQTITNAWNADVSTSGSSVTARNVGHNGTLSQGASTEFGFVGSKGNSNSVPTLTCAAS</sequence>
<reference key="1">
    <citation type="journal article" date="1991" name="J. Bacteriol.">
        <title>DNA sequences of three beta-1,4-endoglucanase genes from Thermomonospora fusca.</title>
        <authorList>
            <person name="Lao G."/>
            <person name="Ghangas G.S."/>
            <person name="Jung E.D."/>
            <person name="Wilson D.B."/>
        </authorList>
    </citation>
    <scope>NUCLEOTIDE SEQUENCE [GENOMIC DNA]</scope>
    <source>
        <strain>YX</strain>
    </source>
</reference>
<reference key="2">
    <citation type="submission" date="1993-05" db="EMBL/GenBank/DDBJ databases">
        <authorList>
            <person name="Jung E.D."/>
            <person name="Lao G."/>
            <person name="Irwin D."/>
            <person name="Barr B."/>
            <person name="Benjamin A."/>
            <person name="Wilson D.B."/>
        </authorList>
    </citation>
    <scope>NUCLEOTIDE SEQUENCE [GENOMIC DNA]</scope>
    <scope>SEQUENCE REVISION</scope>
    <source>
        <strain>YX</strain>
    </source>
</reference>
<reference key="3">
    <citation type="journal article" date="1988" name="Methods Enzymol.">
        <title>Cellulases of Thermomonospora fusca.</title>
        <authorList>
            <person name="Wilson D.B."/>
        </authorList>
    </citation>
    <scope>PROTEIN SEQUENCE OF 32-47</scope>
</reference>
<reference key="4">
    <citation type="journal article" date="1993" name="Biochemistry">
        <title>Dimerization of Thermomonospora fusca beta-1,4-endoglucanase E2.</title>
        <authorList>
            <person name="McGinnis K."/>
            <person name="Kroupis C."/>
            <person name="Wilson D.B."/>
        </authorList>
    </citation>
    <scope>SUBUNIT</scope>
    <scope>MUTAGENESIS OF GLU-163</scope>
</reference>
<reference key="5">
    <citation type="journal article" date="1993" name="Biochemistry">
        <title>Crystal structure of the catalytic domain of a thermophilic endocellulase.</title>
        <authorList>
            <person name="Spezio M."/>
            <person name="Wilson D.B."/>
            <person name="Karplus P.A."/>
        </authorList>
    </citation>
    <scope>X-RAY CRYSTALLOGRAPHY (1.8 ANGSTROMS) OF 32-317</scope>
</reference>
<gene>
    <name type="primary">celB</name>
</gene>
<comment type="catalytic activity">
    <reaction>
        <text>Endohydrolysis of (1-&gt;4)-beta-D-glucosidic linkages in cellulose, lichenin and cereal beta-D-glucans.</text>
        <dbReference type="EC" id="3.2.1.4"/>
    </reaction>
</comment>
<comment type="pathway">
    <text>Glycan metabolism; cellulose degradation.</text>
</comment>
<comment type="subunit">
    <text evidence="5">Homodimer.</text>
</comment>
<comment type="PTM">
    <text>Predicted to be exported by the Tat system. The position of the signal peptide cleavage has been experimentally proven.</text>
</comment>
<comment type="similarity">
    <text evidence="7">Belongs to the glycosyl hydrolase 6 (cellulase B) family.</text>
</comment>
<protein>
    <recommendedName>
        <fullName>Endoglucanase E-2</fullName>
        <ecNumber>3.2.1.4</ecNumber>
    </recommendedName>
    <alternativeName>
        <fullName>Cellulase E-2</fullName>
    </alternativeName>
    <alternativeName>
        <fullName>Cellulase E2</fullName>
    </alternativeName>
    <alternativeName>
        <fullName>Endo-1,4-beta-glucanase E-2</fullName>
    </alternativeName>
</protein>
<accession>P26222</accession>
<dbReference type="EC" id="3.2.1.4"/>
<dbReference type="EMBL" id="M73321">
    <property type="protein sequence ID" value="AAC06388.1"/>
    <property type="molecule type" value="mRNA"/>
</dbReference>
<dbReference type="PIR" id="A42360">
    <property type="entry name" value="A42360"/>
</dbReference>
<dbReference type="PIR" id="T12011">
    <property type="entry name" value="T12011"/>
</dbReference>
<dbReference type="RefSeq" id="WP_011291521.1">
    <property type="nucleotide sequence ID" value="NZ_QGVG01000015.1"/>
</dbReference>
<dbReference type="PDB" id="1TML">
    <property type="method" value="X-ray"/>
    <property type="resolution" value="1.80 A"/>
    <property type="chains" value="A=32-317"/>
</dbReference>
<dbReference type="PDB" id="2BOD">
    <property type="method" value="X-ray"/>
    <property type="resolution" value="1.50 A"/>
    <property type="chains" value="X=32-317"/>
</dbReference>
<dbReference type="PDB" id="2BOE">
    <property type="method" value="X-ray"/>
    <property type="resolution" value="1.15 A"/>
    <property type="chains" value="X=32-317"/>
</dbReference>
<dbReference type="PDB" id="2BOF">
    <property type="method" value="X-ray"/>
    <property type="resolution" value="1.64 A"/>
    <property type="chains" value="X=32-317"/>
</dbReference>
<dbReference type="PDB" id="2BOG">
    <property type="method" value="X-ray"/>
    <property type="resolution" value="1.04 A"/>
    <property type="chains" value="X=32-317"/>
</dbReference>
<dbReference type="PDB" id="3RPT">
    <property type="method" value="X-ray"/>
    <property type="resolution" value="1.30 A"/>
    <property type="chains" value="A/X=33-103, A/X=128-145, A/X=169-317"/>
</dbReference>
<dbReference type="PDBsum" id="1TML"/>
<dbReference type="PDBsum" id="2BOD"/>
<dbReference type="PDBsum" id="2BOE"/>
<dbReference type="PDBsum" id="2BOF"/>
<dbReference type="PDBsum" id="2BOG"/>
<dbReference type="PDBsum" id="3RPT"/>
<dbReference type="SMR" id="P26222"/>
<dbReference type="CAZy" id="CBM2">
    <property type="family name" value="Carbohydrate-Binding Module Family 2"/>
</dbReference>
<dbReference type="CAZy" id="GH6">
    <property type="family name" value="Glycoside Hydrolase Family 6"/>
</dbReference>
<dbReference type="OMA" id="SNVSNFH"/>
<dbReference type="UniPathway" id="UPA00696"/>
<dbReference type="EvolutionaryTrace" id="P26222"/>
<dbReference type="GO" id="GO:0008810">
    <property type="term" value="F:cellulase activity"/>
    <property type="evidence" value="ECO:0007669"/>
    <property type="project" value="UniProtKB-EC"/>
</dbReference>
<dbReference type="GO" id="GO:0030247">
    <property type="term" value="F:polysaccharide binding"/>
    <property type="evidence" value="ECO:0007669"/>
    <property type="project" value="InterPro"/>
</dbReference>
<dbReference type="GO" id="GO:0030245">
    <property type="term" value="P:cellulose catabolic process"/>
    <property type="evidence" value="ECO:0007669"/>
    <property type="project" value="UniProtKB-UniPathway"/>
</dbReference>
<dbReference type="Gene3D" id="2.60.40.290">
    <property type="match status" value="1"/>
</dbReference>
<dbReference type="Gene3D" id="3.20.20.40">
    <property type="entry name" value="1, 4-beta cellobiohydrolase"/>
    <property type="match status" value="1"/>
</dbReference>
<dbReference type="InterPro" id="IPR016288">
    <property type="entry name" value="Beta_cellobiohydrolase"/>
</dbReference>
<dbReference type="InterPro" id="IPR036434">
    <property type="entry name" value="Beta_cellobiohydrolase_sf"/>
</dbReference>
<dbReference type="InterPro" id="IPR001919">
    <property type="entry name" value="CBD2"/>
</dbReference>
<dbReference type="InterPro" id="IPR008965">
    <property type="entry name" value="CBM2/CBM3_carb-bd_dom_sf"/>
</dbReference>
<dbReference type="InterPro" id="IPR012291">
    <property type="entry name" value="CBM2_carb-bd_dom_sf"/>
</dbReference>
<dbReference type="InterPro" id="IPR018366">
    <property type="entry name" value="CBM2_CS"/>
</dbReference>
<dbReference type="InterPro" id="IPR001524">
    <property type="entry name" value="Glyco_hydro_6_CS"/>
</dbReference>
<dbReference type="InterPro" id="IPR006311">
    <property type="entry name" value="TAT_signal"/>
</dbReference>
<dbReference type="PANTHER" id="PTHR34876">
    <property type="match status" value="1"/>
</dbReference>
<dbReference type="PANTHER" id="PTHR34876:SF4">
    <property type="entry name" value="1,4-BETA-D-GLUCAN CELLOBIOHYDROLASE C-RELATED"/>
    <property type="match status" value="1"/>
</dbReference>
<dbReference type="Pfam" id="PF00553">
    <property type="entry name" value="CBM_2"/>
    <property type="match status" value="1"/>
</dbReference>
<dbReference type="Pfam" id="PF01341">
    <property type="entry name" value="Glyco_hydro_6"/>
    <property type="match status" value="1"/>
</dbReference>
<dbReference type="PRINTS" id="PR00733">
    <property type="entry name" value="GLHYDRLASE6"/>
</dbReference>
<dbReference type="SMART" id="SM00637">
    <property type="entry name" value="CBD_II"/>
    <property type="match status" value="1"/>
</dbReference>
<dbReference type="SUPFAM" id="SSF49384">
    <property type="entry name" value="Carbohydrate-binding domain"/>
    <property type="match status" value="1"/>
</dbReference>
<dbReference type="SUPFAM" id="SSF51989">
    <property type="entry name" value="Glycosyl hydrolases family 6, cellulases"/>
    <property type="match status" value="1"/>
</dbReference>
<dbReference type="PROSITE" id="PS51173">
    <property type="entry name" value="CBM2"/>
    <property type="match status" value="1"/>
</dbReference>
<dbReference type="PROSITE" id="PS00561">
    <property type="entry name" value="CBM2_A"/>
    <property type="match status" value="1"/>
</dbReference>
<dbReference type="PROSITE" id="PS00655">
    <property type="entry name" value="GLYCOSYL_HYDROL_F6_1"/>
    <property type="match status" value="1"/>
</dbReference>
<dbReference type="PROSITE" id="PS00656">
    <property type="entry name" value="GLYCOSYL_HYDROL_F6_2"/>
    <property type="match status" value="1"/>
</dbReference>
<dbReference type="PROSITE" id="PS51318">
    <property type="entry name" value="TAT"/>
    <property type="match status" value="1"/>
</dbReference>
<proteinExistence type="evidence at protein level"/>
<feature type="signal peptide" description="Tat-type signal" evidence="2 6">
    <location>
        <begin position="1"/>
        <end position="31"/>
    </location>
</feature>
<feature type="chain" id="PRO_0000007909" description="Endoglucanase E-2">
    <location>
        <begin position="32"/>
        <end position="441"/>
    </location>
</feature>
<feature type="domain" description="CBM2" evidence="3">
    <location>
        <begin position="339"/>
        <end position="441"/>
    </location>
</feature>
<feature type="region of interest" description="Catalytic">
    <location>
        <begin position="32"/>
        <end position="320"/>
    </location>
</feature>
<feature type="region of interest" description="Disordered" evidence="4">
    <location>
        <begin position="317"/>
        <end position="343"/>
    </location>
</feature>
<feature type="region of interest" description="Linker">
    <location>
        <begin position="321"/>
        <end position="340"/>
    </location>
</feature>
<feature type="compositionally biased region" description="Pro residues" evidence="4">
    <location>
        <begin position="323"/>
        <end position="341"/>
    </location>
</feature>
<feature type="active site">
    <location>
        <position position="110"/>
    </location>
</feature>
<feature type="active site" description="Proton donor">
    <location>
        <position position="148"/>
    </location>
</feature>
<feature type="active site" description="Nucleophile">
    <location>
        <position position="296"/>
    </location>
</feature>
<feature type="disulfide bond">
    <location>
        <begin position="111"/>
        <end position="156"/>
    </location>
</feature>
<feature type="disulfide bond">
    <location>
        <begin position="263"/>
        <end position="298"/>
    </location>
</feature>
<feature type="disulfide bond" evidence="1">
    <location>
        <begin position="346"/>
        <end position="438"/>
    </location>
</feature>
<feature type="mutagenesis site" description="Loss of ability to form dimers." evidence="5">
    <original>E</original>
    <variation>G</variation>
    <location>
        <position position="163"/>
    </location>
</feature>
<feature type="strand" evidence="11">
    <location>
        <begin position="34"/>
        <end position="36"/>
    </location>
</feature>
<feature type="helix" evidence="11">
    <location>
        <begin position="43"/>
        <end position="50"/>
    </location>
</feature>
<feature type="helix" evidence="11">
    <location>
        <begin position="57"/>
        <end position="63"/>
    </location>
</feature>
<feature type="turn" evidence="11">
    <location>
        <begin position="64"/>
        <end position="66"/>
    </location>
</feature>
<feature type="strand" evidence="11">
    <location>
        <begin position="71"/>
        <end position="73"/>
    </location>
</feature>
<feature type="turn" evidence="11">
    <location>
        <begin position="78"/>
        <end position="80"/>
    </location>
</feature>
<feature type="helix" evidence="11">
    <location>
        <begin position="81"/>
        <end position="95"/>
    </location>
</feature>
<feature type="strand" evidence="11">
    <location>
        <begin position="100"/>
        <end position="103"/>
    </location>
</feature>
<feature type="strand" evidence="9">
    <location>
        <begin position="107"/>
        <end position="109"/>
    </location>
</feature>
<feature type="strand" evidence="8">
    <location>
        <begin position="116"/>
        <end position="118"/>
    </location>
</feature>
<feature type="strand" evidence="10">
    <location>
        <begin position="119"/>
        <end position="121"/>
    </location>
</feature>
<feature type="helix" evidence="11">
    <location>
        <begin position="122"/>
        <end position="134"/>
    </location>
</feature>
<feature type="turn" evidence="11">
    <location>
        <begin position="135"/>
        <end position="138"/>
    </location>
</feature>
<feature type="strand" evidence="11">
    <location>
        <begin position="142"/>
        <end position="145"/>
    </location>
</feature>
<feature type="helix" evidence="11">
    <location>
        <begin position="149"/>
        <end position="153"/>
    </location>
</feature>
<feature type="helix" evidence="11">
    <location>
        <begin position="158"/>
        <end position="178"/>
    </location>
</feature>
<feature type="strand" evidence="11">
    <location>
        <begin position="183"/>
        <end position="187"/>
    </location>
</feature>
<feature type="strand" evidence="11">
    <location>
        <begin position="191"/>
        <end position="194"/>
    </location>
</feature>
<feature type="helix" evidence="11">
    <location>
        <begin position="196"/>
        <end position="205"/>
    </location>
</feature>
<feature type="helix" evidence="11">
    <location>
        <begin position="208"/>
        <end position="211"/>
    </location>
</feature>
<feature type="strand" evidence="11">
    <location>
        <begin position="213"/>
        <end position="218"/>
    </location>
</feature>
<feature type="helix" evidence="11">
    <location>
        <begin position="225"/>
        <end position="239"/>
    </location>
</feature>
<feature type="strand" evidence="11">
    <location>
        <begin position="245"/>
        <end position="249"/>
    </location>
</feature>
<feature type="strand" evidence="11">
    <location>
        <begin position="274"/>
        <end position="276"/>
    </location>
</feature>
<feature type="strand" evidence="11">
    <location>
        <begin position="283"/>
        <end position="288"/>
    </location>
</feature>
<feature type="strand" evidence="11">
    <location>
        <begin position="297"/>
        <end position="301"/>
    </location>
</feature>
<feature type="helix" evidence="11">
    <location>
        <begin position="307"/>
        <end position="315"/>
    </location>
</feature>
<evidence type="ECO:0000255" key="1"/>
<evidence type="ECO:0000255" key="2">
    <source>
        <dbReference type="PROSITE-ProRule" id="PRU00648"/>
    </source>
</evidence>
<evidence type="ECO:0000255" key="3">
    <source>
        <dbReference type="PROSITE-ProRule" id="PRU01135"/>
    </source>
</evidence>
<evidence type="ECO:0000256" key="4">
    <source>
        <dbReference type="SAM" id="MobiDB-lite"/>
    </source>
</evidence>
<evidence type="ECO:0000269" key="5">
    <source>
    </source>
</evidence>
<evidence type="ECO:0000269" key="6">
    <source ref="3"/>
</evidence>
<evidence type="ECO:0000305" key="7"/>
<evidence type="ECO:0007829" key="8">
    <source>
        <dbReference type="PDB" id="1TML"/>
    </source>
</evidence>
<evidence type="ECO:0007829" key="9">
    <source>
        <dbReference type="PDB" id="2BOD"/>
    </source>
</evidence>
<evidence type="ECO:0007829" key="10">
    <source>
        <dbReference type="PDB" id="2BOE"/>
    </source>
</evidence>
<evidence type="ECO:0007829" key="11">
    <source>
        <dbReference type="PDB" id="2BOG"/>
    </source>
</evidence>
<keyword id="KW-0002">3D-structure</keyword>
<keyword id="KW-0119">Carbohydrate metabolism</keyword>
<keyword id="KW-0136">Cellulose degradation</keyword>
<keyword id="KW-0903">Direct protein sequencing</keyword>
<keyword id="KW-1015">Disulfide bond</keyword>
<keyword id="KW-0326">Glycosidase</keyword>
<keyword id="KW-0378">Hydrolase</keyword>
<keyword id="KW-0624">Polysaccharide degradation</keyword>
<keyword id="KW-0732">Signal</keyword>
<name>GUN2_THEFU</name>